<gene>
    <name type="ORF">MtrDRAFT_AC149210g1v1</name>
</gene>
<sequence>MDASTKTKKGAGGRKGGPRKKSVTRSTRAGLQFPVGRIGRYLKKGRYAQRVGTGAPVYLAAVLEYLAAEVLELAGNAARDNKKNRIIPRHVLLAVRNDEELGKLLAGVTIAHGGVLPNINPILLPKKNEKAATTTKSPSKATKSPKKA</sequence>
<protein>
    <recommendedName>
        <fullName>Probable histone H2A.1</fullName>
    </recommendedName>
</protein>
<comment type="function">
    <text>Core component of nucleosome. Nucleosomes wrap and compact DNA into chromatin, limiting DNA accessibility to the cellular machineries which require DNA as a template. Histones thereby play a central role in transcription regulation, DNA repair, DNA replication and chromosomal stability. DNA accessibility is regulated via a complex set of post-translational modifications of histones, also called histone code, and nucleosome remodeling.</text>
</comment>
<comment type="subunit">
    <text>The nucleosome is a histone octamer containing two molecules each of H2A, H2B, H3 and H4 assembled in one H3-H4 heterotetramer and two H2A-H2B heterodimers. The octamer wraps approximately 147 bp of DNA.</text>
</comment>
<comment type="subcellular location">
    <subcellularLocation>
        <location evidence="1">Nucleus</location>
    </subcellularLocation>
    <subcellularLocation>
        <location evidence="1">Chromosome</location>
    </subcellularLocation>
</comment>
<comment type="domain">
    <text>Contains 2 SPKK motifs which may interact with the minor groove of A/T-rich DNA sites. Phosphorylation of this motif may regulate DNA binding. This motif is reiterated in both termini of histone H1 and in the N-terminus of sea urchin histones H2B, but its presence in the C-terminus seems to be unique to plant H2A.</text>
</comment>
<comment type="similarity">
    <text evidence="3">Belongs to the histone H2A family.</text>
</comment>
<name>H2A1_MEDTR</name>
<reference key="1">
    <citation type="submission" date="2006-04" db="EMBL/GenBank/DDBJ databases">
        <authorList>
            <consortium name="The international Medicago genome annotation group"/>
        </authorList>
    </citation>
    <scope>NUCLEOTIDE SEQUENCE [LARGE SCALE GENOMIC DNA]</scope>
</reference>
<keyword id="KW-0158">Chromosome</keyword>
<keyword id="KW-0238">DNA-binding</keyword>
<keyword id="KW-0544">Nucleosome core</keyword>
<keyword id="KW-0539">Nucleus</keyword>
<proteinExistence type="inferred from homology"/>
<organism>
    <name type="scientific">Medicago truncatula</name>
    <name type="common">Barrel medic</name>
    <name type="synonym">Medicago tribuloides</name>
    <dbReference type="NCBI Taxonomy" id="3880"/>
    <lineage>
        <taxon>Eukaryota</taxon>
        <taxon>Viridiplantae</taxon>
        <taxon>Streptophyta</taxon>
        <taxon>Embryophyta</taxon>
        <taxon>Tracheophyta</taxon>
        <taxon>Spermatophyta</taxon>
        <taxon>Magnoliopsida</taxon>
        <taxon>eudicotyledons</taxon>
        <taxon>Gunneridae</taxon>
        <taxon>Pentapetalae</taxon>
        <taxon>rosids</taxon>
        <taxon>fabids</taxon>
        <taxon>Fabales</taxon>
        <taxon>Fabaceae</taxon>
        <taxon>Papilionoideae</taxon>
        <taxon>50 kb inversion clade</taxon>
        <taxon>NPAAA clade</taxon>
        <taxon>Hologalegina</taxon>
        <taxon>IRL clade</taxon>
        <taxon>Trifolieae</taxon>
        <taxon>Medicago</taxon>
    </lineage>
</organism>
<dbReference type="EMBL" id="AC149210">
    <property type="protein sequence ID" value="ABD32277.1"/>
    <property type="molecule type" value="Genomic_DNA"/>
</dbReference>
<dbReference type="RefSeq" id="XP_003597346.1">
    <property type="nucleotide sequence ID" value="XM_003597298.2"/>
</dbReference>
<dbReference type="SMR" id="Q2HU68"/>
<dbReference type="PaxDb" id="3880-AES67597"/>
<dbReference type="ProMEX" id="Q2HU68"/>
<dbReference type="KEGG" id="mtr:11418081"/>
<dbReference type="eggNOG" id="KOG1756">
    <property type="taxonomic scope" value="Eukaryota"/>
</dbReference>
<dbReference type="HOGENOM" id="CLU_062828_1_1_1"/>
<dbReference type="OMA" id="EGHYRVG"/>
<dbReference type="OrthoDB" id="9421954at2759"/>
<dbReference type="ExpressionAtlas" id="Q2HU68">
    <property type="expression patterns" value="differential"/>
</dbReference>
<dbReference type="GO" id="GO:0000786">
    <property type="term" value="C:nucleosome"/>
    <property type="evidence" value="ECO:0007669"/>
    <property type="project" value="UniProtKB-KW"/>
</dbReference>
<dbReference type="GO" id="GO:0005634">
    <property type="term" value="C:nucleus"/>
    <property type="evidence" value="ECO:0007669"/>
    <property type="project" value="UniProtKB-SubCell"/>
</dbReference>
<dbReference type="GO" id="GO:0003677">
    <property type="term" value="F:DNA binding"/>
    <property type="evidence" value="ECO:0007669"/>
    <property type="project" value="UniProtKB-KW"/>
</dbReference>
<dbReference type="GO" id="GO:0046982">
    <property type="term" value="F:protein heterodimerization activity"/>
    <property type="evidence" value="ECO:0007669"/>
    <property type="project" value="InterPro"/>
</dbReference>
<dbReference type="GO" id="GO:0030527">
    <property type="term" value="F:structural constituent of chromatin"/>
    <property type="evidence" value="ECO:0007669"/>
    <property type="project" value="InterPro"/>
</dbReference>
<dbReference type="CDD" id="cd00074">
    <property type="entry name" value="HFD_H2A"/>
    <property type="match status" value="1"/>
</dbReference>
<dbReference type="FunFam" id="1.10.20.10:FF:000026">
    <property type="entry name" value="Histone H2A"/>
    <property type="match status" value="1"/>
</dbReference>
<dbReference type="Gene3D" id="1.10.20.10">
    <property type="entry name" value="Histone, subunit A"/>
    <property type="match status" value="1"/>
</dbReference>
<dbReference type="InterPro" id="IPR009072">
    <property type="entry name" value="Histone-fold"/>
</dbReference>
<dbReference type="InterPro" id="IPR002119">
    <property type="entry name" value="Histone_H2A"/>
</dbReference>
<dbReference type="InterPro" id="IPR007125">
    <property type="entry name" value="Histone_H2A/H2B/H3"/>
</dbReference>
<dbReference type="InterPro" id="IPR032454">
    <property type="entry name" value="Histone_H2A_C"/>
</dbReference>
<dbReference type="InterPro" id="IPR032458">
    <property type="entry name" value="Histone_H2A_CS"/>
</dbReference>
<dbReference type="PANTHER" id="PTHR23430">
    <property type="entry name" value="HISTONE H2A"/>
    <property type="match status" value="1"/>
</dbReference>
<dbReference type="Pfam" id="PF00125">
    <property type="entry name" value="Histone"/>
    <property type="match status" value="1"/>
</dbReference>
<dbReference type="Pfam" id="PF16211">
    <property type="entry name" value="Histone_H2A_C"/>
    <property type="match status" value="1"/>
</dbReference>
<dbReference type="PRINTS" id="PR00620">
    <property type="entry name" value="HISTONEH2A"/>
</dbReference>
<dbReference type="SMART" id="SM00414">
    <property type="entry name" value="H2A"/>
    <property type="match status" value="1"/>
</dbReference>
<dbReference type="SUPFAM" id="SSF47113">
    <property type="entry name" value="Histone-fold"/>
    <property type="match status" value="1"/>
</dbReference>
<dbReference type="PROSITE" id="PS00046">
    <property type="entry name" value="HISTONE_H2A"/>
    <property type="match status" value="1"/>
</dbReference>
<evidence type="ECO:0000250" key="1"/>
<evidence type="ECO:0000256" key="2">
    <source>
        <dbReference type="SAM" id="MobiDB-lite"/>
    </source>
</evidence>
<evidence type="ECO:0000305" key="3"/>
<accession>Q2HU68</accession>
<feature type="chain" id="PRO_0000239992" description="Probable histone H2A.1">
    <location>
        <begin position="1"/>
        <end position="148"/>
    </location>
</feature>
<feature type="region of interest" description="Disordered" evidence="2">
    <location>
        <begin position="1"/>
        <end position="28"/>
    </location>
</feature>
<feature type="region of interest" description="Disordered" evidence="2">
    <location>
        <begin position="127"/>
        <end position="148"/>
    </location>
</feature>
<feature type="short sequence motif" description="SPKK motif 1">
    <location>
        <begin position="137"/>
        <end position="140"/>
    </location>
</feature>
<feature type="short sequence motif" description="SPKK motif 2">
    <location>
        <begin position="144"/>
        <end position="147"/>
    </location>
</feature>
<feature type="compositionally biased region" description="Basic residues" evidence="2">
    <location>
        <begin position="1"/>
        <end position="23"/>
    </location>
</feature>
<feature type="compositionally biased region" description="Low complexity" evidence="2">
    <location>
        <begin position="131"/>
        <end position="142"/>
    </location>
</feature>